<accession>O96910</accession>
<evidence type="ECO:0000250" key="1"/>
<evidence type="ECO:0000269" key="2">
    <source>
    </source>
</evidence>
<evidence type="ECO:0000269" key="3">
    <source>
    </source>
</evidence>
<evidence type="ECO:0000269" key="4">
    <source>
    </source>
</evidence>
<evidence type="ECO:0000269" key="5">
    <source>
    </source>
</evidence>
<evidence type="ECO:0007829" key="6">
    <source>
        <dbReference type="PDB" id="1T50"/>
    </source>
</evidence>
<sequence>MKVAIIILSLALVAAVFADQNCDIGNITSQCQMQHKNCEDANGCDTIIEECKTSMVERCQNQEFESAAGSTTLGPQ</sequence>
<protein>
    <recommendedName>
        <fullName>Attractin</fullName>
    </recommendedName>
</protein>
<comment type="function">
    <text evidence="1 2 4">Water-borne pheromone that attract the marine mollusk Aplysia into breeding aggregations and coordinate male and female reproductive behavior within the aggregation.</text>
</comment>
<comment type="subunit">
    <text>Binds to temptin and enticin.</text>
</comment>
<comment type="subcellular location">
    <subcellularLocation>
        <location>Secreted</location>
    </subcellularLocation>
</comment>
<comment type="tissue specificity">
    <text>Produced by the albumen gland of the egg cordons.</text>
</comment>
<comment type="mass spectrometry"/>
<reference key="1">
    <citation type="journal article" date="1997" name="Brain Res. Mol. Brain Res.">
        <title>Molecular cloning of a cDNA encoding a potential water-borne pheromonal attractant released during Aplysia egg laying.</title>
        <authorList>
            <person name="Fan X."/>
            <person name="Wu B."/>
            <person name="Nagle G.T."/>
            <person name="Painter S.D."/>
        </authorList>
    </citation>
    <scope>NUCLEOTIDE SEQUENCE [MRNA]</scope>
    <scope>PARTIAL PROTEIN SEQUENCE</scope>
    <source>
        <tissue>Albumen gland</tissue>
    </source>
</reference>
<reference key="2">
    <citation type="journal article" date="1998" name="Biol. Bull.">
        <title>Characterization of Aplysia attractin, the first water-borne peptide pheromone in invertebrates.</title>
        <authorList>
            <person name="Painter S.D."/>
            <person name="Clough B."/>
            <person name="Garden R.W."/>
            <person name="Sweedler J.V."/>
            <person name="Nagle G.T."/>
        </authorList>
    </citation>
    <scope>PROTEIN SEQUENCE OF 19-76</scope>
    <scope>MASS SPECTROMETRY</scope>
    <source>
        <tissue>Albumen gland</tissue>
    </source>
</reference>
<reference key="3">
    <citation type="journal article" date="2003" name="Biol. Bull.">
        <title>Behavioral characterization of attractin, a water-borne peptide pheromone in the genus aplysia.</title>
        <authorList>
            <person name="Painter S.D."/>
            <person name="Clough B."/>
            <person name="Black S."/>
            <person name="Nagle G.T."/>
        </authorList>
    </citation>
    <scope>FUNCTION</scope>
</reference>
<reference key="4">
    <citation type="journal article" date="2004" name="J. Biol. Chem.">
        <title>Characterization of Aplysia enticin and temptin, two novel water-borne protein pheromones that act in concert with attractin to stimulate mate attraction.</title>
        <authorList>
            <person name="Cummins S.F."/>
            <person name="Nichols A.E."/>
            <person name="Amare A."/>
            <person name="Hummon A.B."/>
            <person name="Sweedler J.V."/>
            <person name="Nagle G.T."/>
        </authorList>
    </citation>
    <scope>FUNCTION</scope>
    <scope>INTERACTION WITH ENTICIN AND TEMPTIN</scope>
    <source>
        <tissue>Albumen gland</tissue>
    </source>
</reference>
<reference key="5">
    <citation type="journal article" date="2003" name="Biochemistry">
        <title>NMR solution structure of attractin, a water-borne protein pheromone from the mollusk Aplysia californica.</title>
        <authorList>
            <person name="Garimella R."/>
            <person name="Xu Y."/>
            <person name="Schein C.H."/>
            <person name="Rajarathnam K."/>
            <person name="Nagle G.T."/>
            <person name="Painter S.D."/>
            <person name="Braun W."/>
        </authorList>
    </citation>
    <scope>STRUCTURE BY NMR OF 19-76</scope>
    <scope>DISULFIDE BONDS</scope>
</reference>
<feature type="signal peptide" evidence="5">
    <location>
        <begin position="1"/>
        <end position="18"/>
    </location>
</feature>
<feature type="chain" id="PRO_0000020764" description="Attractin">
    <location>
        <begin position="19"/>
        <end position="76"/>
    </location>
</feature>
<feature type="glycosylation site" description="N-linked (GlcNAc...) asparagine">
    <location>
        <position position="26"/>
    </location>
</feature>
<feature type="disulfide bond" evidence="3">
    <location>
        <begin position="22"/>
        <end position="59"/>
    </location>
</feature>
<feature type="disulfide bond" evidence="3">
    <location>
        <begin position="31"/>
        <end position="51"/>
    </location>
</feature>
<feature type="disulfide bond" evidence="3">
    <location>
        <begin position="38"/>
        <end position="44"/>
    </location>
</feature>
<feature type="turn" evidence="6">
    <location>
        <begin position="24"/>
        <end position="27"/>
    </location>
</feature>
<feature type="helix" evidence="6">
    <location>
        <begin position="28"/>
        <end position="34"/>
    </location>
</feature>
<feature type="strand" evidence="6">
    <location>
        <begin position="37"/>
        <end position="39"/>
    </location>
</feature>
<feature type="turn" evidence="6">
    <location>
        <begin position="41"/>
        <end position="43"/>
    </location>
</feature>
<feature type="helix" evidence="6">
    <location>
        <begin position="48"/>
        <end position="56"/>
    </location>
</feature>
<feature type="helix" evidence="6">
    <location>
        <begin position="57"/>
        <end position="59"/>
    </location>
</feature>
<feature type="helix" evidence="6">
    <location>
        <begin position="60"/>
        <end position="63"/>
    </location>
</feature>
<feature type="strand" evidence="6">
    <location>
        <begin position="68"/>
        <end position="71"/>
    </location>
</feature>
<gene>
    <name type="primary">ATT</name>
</gene>
<dbReference type="EMBL" id="U85586">
    <property type="protein sequence ID" value="AAD00569.1"/>
    <property type="molecule type" value="mRNA"/>
</dbReference>
<dbReference type="PIR" id="A59060">
    <property type="entry name" value="A59060"/>
</dbReference>
<dbReference type="RefSeq" id="NP_001191562.1">
    <property type="nucleotide sequence ID" value="NM_001204633.1"/>
</dbReference>
<dbReference type="PDB" id="1T50">
    <property type="method" value="NMR"/>
    <property type="chains" value="A=19-76"/>
</dbReference>
<dbReference type="PDBsum" id="1T50"/>
<dbReference type="SMR" id="O96910"/>
<dbReference type="GlyCosmos" id="O96910">
    <property type="glycosylation" value="1 site, No reported glycans"/>
</dbReference>
<dbReference type="EnsemblMetazoa" id="NM_001204633.1">
    <property type="protein sequence ID" value="NP_001191562.1"/>
    <property type="gene ID" value="GeneID_100533337"/>
</dbReference>
<dbReference type="GeneID" id="100533337"/>
<dbReference type="CTD" id="100533337"/>
<dbReference type="EvolutionaryTrace" id="O96910"/>
<dbReference type="Proteomes" id="UP000694888">
    <property type="component" value="Unplaced"/>
</dbReference>
<dbReference type="GO" id="GO:0005576">
    <property type="term" value="C:extracellular region"/>
    <property type="evidence" value="ECO:0007669"/>
    <property type="project" value="UniProtKB-SubCell"/>
</dbReference>
<dbReference type="GO" id="GO:0000772">
    <property type="term" value="F:mating pheromone activity"/>
    <property type="evidence" value="ECO:0007669"/>
    <property type="project" value="InterPro"/>
</dbReference>
<dbReference type="GO" id="GO:0019953">
    <property type="term" value="P:sexual reproduction"/>
    <property type="evidence" value="ECO:0007669"/>
    <property type="project" value="InterPro"/>
</dbReference>
<dbReference type="Gene3D" id="1.20.1400.10">
    <property type="entry name" value="Attractin"/>
    <property type="match status" value="1"/>
</dbReference>
<dbReference type="InterPro" id="IPR012529">
    <property type="entry name" value="Attractin"/>
</dbReference>
<dbReference type="InterPro" id="IPR036585">
    <property type="entry name" value="Attractin_sf"/>
</dbReference>
<dbReference type="Pfam" id="PF08037">
    <property type="entry name" value="Attractin"/>
    <property type="match status" value="1"/>
</dbReference>
<dbReference type="SUPFAM" id="SSF90183">
    <property type="entry name" value="Mollusk pheromone"/>
    <property type="match status" value="1"/>
</dbReference>
<keyword id="KW-0002">3D-structure</keyword>
<keyword id="KW-0903">Direct protein sequencing</keyword>
<keyword id="KW-1015">Disulfide bond</keyword>
<keyword id="KW-0325">Glycoprotein</keyword>
<keyword id="KW-0588">Pheromone</keyword>
<keyword id="KW-0964">Secreted</keyword>
<keyword id="KW-0732">Signal</keyword>
<organism>
    <name type="scientific">Aplysia californica</name>
    <name type="common">California sea hare</name>
    <dbReference type="NCBI Taxonomy" id="6500"/>
    <lineage>
        <taxon>Eukaryota</taxon>
        <taxon>Metazoa</taxon>
        <taxon>Spiralia</taxon>
        <taxon>Lophotrochozoa</taxon>
        <taxon>Mollusca</taxon>
        <taxon>Gastropoda</taxon>
        <taxon>Heterobranchia</taxon>
        <taxon>Euthyneura</taxon>
        <taxon>Tectipleura</taxon>
        <taxon>Aplysiida</taxon>
        <taxon>Aplysioidea</taxon>
        <taxon>Aplysiidae</taxon>
        <taxon>Aplysia</taxon>
    </lineage>
</organism>
<name>ATT_APLCA</name>
<proteinExistence type="evidence at protein level"/>